<evidence type="ECO:0000250" key="1"/>
<evidence type="ECO:0000255" key="2">
    <source>
        <dbReference type="PROSITE-ProRule" id="PRU00434"/>
    </source>
</evidence>
<evidence type="ECO:0000305" key="3"/>
<dbReference type="EMBL" id="AF045609">
    <property type="protein sequence ID" value="AAD12046.1"/>
    <property type="molecule type" value="Genomic_DNA"/>
</dbReference>
<dbReference type="EMBL" id="AL591688">
    <property type="protein sequence ID" value="CAC45271.1"/>
    <property type="molecule type" value="Genomic_DNA"/>
</dbReference>
<dbReference type="RefSeq" id="NP_384805.1">
    <property type="nucleotide sequence ID" value="NC_003047.1"/>
</dbReference>
<dbReference type="RefSeq" id="WP_003529832.1">
    <property type="nucleotide sequence ID" value="NC_003047.1"/>
</dbReference>
<dbReference type="SMR" id="Q9Z3R9"/>
<dbReference type="TCDB" id="3.A.1.1.8">
    <property type="family name" value="the atp-binding cassette (abc) superfamily"/>
</dbReference>
<dbReference type="EnsemblBacteria" id="CAC45271">
    <property type="protein sequence ID" value="CAC45271"/>
    <property type="gene ID" value="SMc03065"/>
</dbReference>
<dbReference type="KEGG" id="sme:SMc03065"/>
<dbReference type="PATRIC" id="fig|266834.11.peg.2074"/>
<dbReference type="eggNOG" id="COG3842">
    <property type="taxonomic scope" value="Bacteria"/>
</dbReference>
<dbReference type="HOGENOM" id="CLU_000604_1_1_5"/>
<dbReference type="OrthoDB" id="9802264at2"/>
<dbReference type="BRENDA" id="7.5.2.B9">
    <property type="organism ID" value="5347"/>
</dbReference>
<dbReference type="Proteomes" id="UP000001976">
    <property type="component" value="Chromosome"/>
</dbReference>
<dbReference type="GO" id="GO:0055052">
    <property type="term" value="C:ATP-binding cassette (ABC) transporter complex, substrate-binding subunit-containing"/>
    <property type="evidence" value="ECO:0007669"/>
    <property type="project" value="TreeGrafter"/>
</dbReference>
<dbReference type="GO" id="GO:1990060">
    <property type="term" value="C:maltose transport complex"/>
    <property type="evidence" value="ECO:0007669"/>
    <property type="project" value="TreeGrafter"/>
</dbReference>
<dbReference type="GO" id="GO:0015423">
    <property type="term" value="F:ABC-type maltose transporter activity"/>
    <property type="evidence" value="ECO:0007669"/>
    <property type="project" value="TreeGrafter"/>
</dbReference>
<dbReference type="GO" id="GO:0005524">
    <property type="term" value="F:ATP binding"/>
    <property type="evidence" value="ECO:0007669"/>
    <property type="project" value="UniProtKB-KW"/>
</dbReference>
<dbReference type="GO" id="GO:0016887">
    <property type="term" value="F:ATP hydrolysis activity"/>
    <property type="evidence" value="ECO:0007669"/>
    <property type="project" value="InterPro"/>
</dbReference>
<dbReference type="CDD" id="cd03301">
    <property type="entry name" value="ABC_MalK_N"/>
    <property type="match status" value="1"/>
</dbReference>
<dbReference type="FunFam" id="3.40.50.300:FF:000042">
    <property type="entry name" value="Maltose/maltodextrin ABC transporter, ATP-binding protein"/>
    <property type="match status" value="1"/>
</dbReference>
<dbReference type="Gene3D" id="2.40.50.100">
    <property type="match status" value="1"/>
</dbReference>
<dbReference type="Gene3D" id="2.40.50.140">
    <property type="entry name" value="Nucleic acid-binding proteins"/>
    <property type="match status" value="1"/>
</dbReference>
<dbReference type="Gene3D" id="3.40.50.300">
    <property type="entry name" value="P-loop containing nucleotide triphosphate hydrolases"/>
    <property type="match status" value="1"/>
</dbReference>
<dbReference type="InterPro" id="IPR003593">
    <property type="entry name" value="AAA+_ATPase"/>
</dbReference>
<dbReference type="InterPro" id="IPR003439">
    <property type="entry name" value="ABC_transporter-like_ATP-bd"/>
</dbReference>
<dbReference type="InterPro" id="IPR017871">
    <property type="entry name" value="ABC_transporter-like_CS"/>
</dbReference>
<dbReference type="InterPro" id="IPR015855">
    <property type="entry name" value="ABC_transpr_MalK-like"/>
</dbReference>
<dbReference type="InterPro" id="IPR047641">
    <property type="entry name" value="ABC_transpr_MalK/UgpC-like"/>
</dbReference>
<dbReference type="InterPro" id="IPR008995">
    <property type="entry name" value="Mo/tungstate-bd_C_term_dom"/>
</dbReference>
<dbReference type="InterPro" id="IPR012340">
    <property type="entry name" value="NA-bd_OB-fold"/>
</dbReference>
<dbReference type="InterPro" id="IPR040582">
    <property type="entry name" value="OB_MalK-like"/>
</dbReference>
<dbReference type="InterPro" id="IPR027417">
    <property type="entry name" value="P-loop_NTPase"/>
</dbReference>
<dbReference type="InterPro" id="IPR005116">
    <property type="entry name" value="Transp-assoc_OB_typ1"/>
</dbReference>
<dbReference type="NCBIfam" id="NF008653">
    <property type="entry name" value="PRK11650.1"/>
    <property type="match status" value="1"/>
</dbReference>
<dbReference type="PANTHER" id="PTHR43875">
    <property type="entry name" value="MALTODEXTRIN IMPORT ATP-BINDING PROTEIN MSMX"/>
    <property type="match status" value="1"/>
</dbReference>
<dbReference type="PANTHER" id="PTHR43875:SF3">
    <property type="entry name" value="MALTOSE_MALTODEXTRIN IMPORT ATP-BINDING PROTEIN MALK"/>
    <property type="match status" value="1"/>
</dbReference>
<dbReference type="Pfam" id="PF00005">
    <property type="entry name" value="ABC_tran"/>
    <property type="match status" value="1"/>
</dbReference>
<dbReference type="Pfam" id="PF17912">
    <property type="entry name" value="OB_MalK"/>
    <property type="match status" value="1"/>
</dbReference>
<dbReference type="Pfam" id="PF03459">
    <property type="entry name" value="TOBE"/>
    <property type="match status" value="1"/>
</dbReference>
<dbReference type="SMART" id="SM00382">
    <property type="entry name" value="AAA"/>
    <property type="match status" value="1"/>
</dbReference>
<dbReference type="SUPFAM" id="SSF50331">
    <property type="entry name" value="MOP-like"/>
    <property type="match status" value="1"/>
</dbReference>
<dbReference type="SUPFAM" id="SSF52540">
    <property type="entry name" value="P-loop containing nucleoside triphosphate hydrolases"/>
    <property type="match status" value="1"/>
</dbReference>
<dbReference type="PROSITE" id="PS00211">
    <property type="entry name" value="ABC_TRANSPORTER_1"/>
    <property type="match status" value="1"/>
</dbReference>
<dbReference type="PROSITE" id="PS50893">
    <property type="entry name" value="ABC_TRANSPORTER_2"/>
    <property type="match status" value="1"/>
</dbReference>
<accession>Q9Z3R9</accession>
<sequence>MTGLLLKDIRKSYGAVDVIHGIDLDIKEGEFVVFVGPSGCGKSTLLRMIAGLEEITGGDMFIDGERVNDVPPSKRGIAMVFQSYALYPHMTVYDNMAFGMRIARESKEEIDRRVRGAADMLQLTPYLDRLPKALSGGQRQRVAIGRAICRNPKVFLFDEPLSNLDAALRVATRIEIAKLSERMSDTTMIYVTHDQVEAMTLADRIVVLSAGHIEQVGAPLELYERPANLFVARFIGSPAMNVIPATITATGQQTAVSLAGGKSVTLDVPTNASENGKTASFGVRPEDLRVTEADDFLFEGTVSIVEALGEVTLLYIEGLVENEPIIAKMPGIARVGRGDKVRFTADKAKLHLFDTNGQSYRA</sequence>
<organism>
    <name type="scientific">Rhizobium meliloti (strain 1021)</name>
    <name type="common">Ensifer meliloti</name>
    <name type="synonym">Sinorhizobium meliloti</name>
    <dbReference type="NCBI Taxonomy" id="266834"/>
    <lineage>
        <taxon>Bacteria</taxon>
        <taxon>Pseudomonadati</taxon>
        <taxon>Pseudomonadota</taxon>
        <taxon>Alphaproteobacteria</taxon>
        <taxon>Hyphomicrobiales</taxon>
        <taxon>Rhizobiaceae</taxon>
        <taxon>Sinorhizobium/Ensifer group</taxon>
        <taxon>Sinorhizobium</taxon>
    </lineage>
</organism>
<reference key="1">
    <citation type="journal article" date="1999" name="J. Bacteriol.">
        <title>A novel Sinorhizobium meliloti operon encodes an alpha-glucosidase and a periplasmic-binding-protein-dependent transport system for alpha-glucosides.</title>
        <authorList>
            <person name="Willis L.B."/>
            <person name="Walker G.C."/>
        </authorList>
    </citation>
    <scope>NUCLEOTIDE SEQUENCE [GENOMIC DNA]</scope>
</reference>
<reference key="2">
    <citation type="journal article" date="2001" name="Proc. Natl. Acad. Sci. U.S.A.">
        <title>Analysis of the chromosome sequence of the legume symbiont Sinorhizobium meliloti strain 1021.</title>
        <authorList>
            <person name="Capela D."/>
            <person name="Barloy-Hubler F."/>
            <person name="Gouzy J."/>
            <person name="Bothe G."/>
            <person name="Ampe F."/>
            <person name="Batut J."/>
            <person name="Boistard P."/>
            <person name="Becker A."/>
            <person name="Boutry M."/>
            <person name="Cadieu E."/>
            <person name="Dreano S."/>
            <person name="Gloux S."/>
            <person name="Godrie T."/>
            <person name="Goffeau A."/>
            <person name="Kahn D."/>
            <person name="Kiss E."/>
            <person name="Lelaure V."/>
            <person name="Masuy D."/>
            <person name="Pohl T."/>
            <person name="Portetelle D."/>
            <person name="Puehler A."/>
            <person name="Purnelle B."/>
            <person name="Ramsperger U."/>
            <person name="Renard C."/>
            <person name="Thebault P."/>
            <person name="Vandenbol M."/>
            <person name="Weidner S."/>
            <person name="Galibert F."/>
        </authorList>
    </citation>
    <scope>NUCLEOTIDE SEQUENCE [LARGE SCALE GENOMIC DNA]</scope>
    <source>
        <strain>1021</strain>
    </source>
</reference>
<reference key="3">
    <citation type="journal article" date="2001" name="Science">
        <title>The composite genome of the legume symbiont Sinorhizobium meliloti.</title>
        <authorList>
            <person name="Galibert F."/>
            <person name="Finan T.M."/>
            <person name="Long S.R."/>
            <person name="Puehler A."/>
            <person name="Abola P."/>
            <person name="Ampe F."/>
            <person name="Barloy-Hubler F."/>
            <person name="Barnett M.J."/>
            <person name="Becker A."/>
            <person name="Boistard P."/>
            <person name="Bothe G."/>
            <person name="Boutry M."/>
            <person name="Bowser L."/>
            <person name="Buhrmester J."/>
            <person name="Cadieu E."/>
            <person name="Capela D."/>
            <person name="Chain P."/>
            <person name="Cowie A."/>
            <person name="Davis R.W."/>
            <person name="Dreano S."/>
            <person name="Federspiel N.A."/>
            <person name="Fisher R.F."/>
            <person name="Gloux S."/>
            <person name="Godrie T."/>
            <person name="Goffeau A."/>
            <person name="Golding B."/>
            <person name="Gouzy J."/>
            <person name="Gurjal M."/>
            <person name="Hernandez-Lucas I."/>
            <person name="Hong A."/>
            <person name="Huizar L."/>
            <person name="Hyman R.W."/>
            <person name="Jones T."/>
            <person name="Kahn D."/>
            <person name="Kahn M.L."/>
            <person name="Kalman S."/>
            <person name="Keating D.H."/>
            <person name="Kiss E."/>
            <person name="Komp C."/>
            <person name="Lelaure V."/>
            <person name="Masuy D."/>
            <person name="Palm C."/>
            <person name="Peck M.C."/>
            <person name="Pohl T.M."/>
            <person name="Portetelle D."/>
            <person name="Purnelle B."/>
            <person name="Ramsperger U."/>
            <person name="Surzycki R."/>
            <person name="Thebault P."/>
            <person name="Vandenbol M."/>
            <person name="Vorhoelter F.J."/>
            <person name="Weidner S."/>
            <person name="Wells D.H."/>
            <person name="Wong K."/>
            <person name="Yeh K.-C."/>
            <person name="Batut J."/>
        </authorList>
    </citation>
    <scope>NUCLEOTIDE SEQUENCE [LARGE SCALE GENOMIC DNA]</scope>
    <source>
        <strain>1021</strain>
    </source>
</reference>
<gene>
    <name type="primary">aglK</name>
    <name type="ordered locus">R00699</name>
    <name type="ORF">SMc03065</name>
</gene>
<comment type="function">
    <text>Part of the binding-protein-dependent transport system for alpha-glucosides such as sucrose, maltose and trehalose. Probably responsible for energy coupling to the transport system.</text>
</comment>
<comment type="subcellular location">
    <subcellularLocation>
        <location evidence="1">Cell inner membrane</location>
        <topology evidence="1">Peripheral membrane protein</topology>
    </subcellularLocation>
</comment>
<comment type="similarity">
    <text evidence="3">Belongs to the ABC transporter superfamily.</text>
</comment>
<keyword id="KW-0067">ATP-binding</keyword>
<keyword id="KW-0997">Cell inner membrane</keyword>
<keyword id="KW-1003">Cell membrane</keyword>
<keyword id="KW-0472">Membrane</keyword>
<keyword id="KW-0547">Nucleotide-binding</keyword>
<keyword id="KW-1185">Reference proteome</keyword>
<keyword id="KW-0762">Sugar transport</keyword>
<keyword id="KW-0813">Transport</keyword>
<feature type="chain" id="PRO_0000091924" description="Alpha-glucoside transport ATP-binding protein AglK">
    <location>
        <begin position="1"/>
        <end position="362"/>
    </location>
</feature>
<feature type="domain" description="ABC transporter" evidence="2">
    <location>
        <begin position="4"/>
        <end position="235"/>
    </location>
</feature>
<feature type="binding site" evidence="2">
    <location>
        <begin position="36"/>
        <end position="43"/>
    </location>
    <ligand>
        <name>ATP</name>
        <dbReference type="ChEBI" id="CHEBI:30616"/>
    </ligand>
</feature>
<feature type="sequence conflict" description="In Ref. 1." evidence="3" ref="1">
    <original>RIEIAKLSERMSD</original>
    <variation>AIENRQAQRAMSN</variation>
    <location>
        <begin position="173"/>
        <end position="185"/>
    </location>
</feature>
<feature type="sequence conflict" description="In Ref. 1; AAD12046." evidence="3" ref="1">
    <original>LSAGHIEQV</original>
    <variation>FSRRSTFEQF</variation>
    <location>
        <begin position="208"/>
        <end position="216"/>
    </location>
</feature>
<feature type="sequence conflict" description="In Ref. 1; AAD12046." evidence="3" ref="1">
    <original>L</original>
    <variation>F</variation>
    <location>
        <position position="220"/>
    </location>
</feature>
<feature type="sequence conflict" description="In Ref. 1; AAD12046." evidence="3" ref="1">
    <original>L</original>
    <variation>F</variation>
    <location>
        <position position="229"/>
    </location>
</feature>
<feature type="sequence conflict" description="In Ref. 1; AAD12046." evidence="3" ref="1">
    <original>A</original>
    <variation>P</variation>
    <location>
        <position position="239"/>
    </location>
</feature>
<name>AGLK_RHIME</name>
<protein>
    <recommendedName>
        <fullName>Alpha-glucoside transport ATP-binding protein AglK</fullName>
    </recommendedName>
</protein>
<proteinExistence type="inferred from homology"/>